<proteinExistence type="inferred from homology"/>
<gene>
    <name evidence="1" type="primary">gpsA</name>
    <name type="ordered locus">TWT_506</name>
</gene>
<dbReference type="EC" id="1.1.1.94" evidence="1"/>
<dbReference type="EMBL" id="AE014184">
    <property type="protein sequence ID" value="AAO44603.1"/>
    <property type="molecule type" value="Genomic_DNA"/>
</dbReference>
<dbReference type="SMR" id="Q83G27"/>
<dbReference type="STRING" id="203267.TWT_506"/>
<dbReference type="KEGG" id="twh:TWT_506"/>
<dbReference type="eggNOG" id="COG0240">
    <property type="taxonomic scope" value="Bacteria"/>
</dbReference>
<dbReference type="HOGENOM" id="CLU_033449_0_0_11"/>
<dbReference type="UniPathway" id="UPA00940"/>
<dbReference type="Proteomes" id="UP000002200">
    <property type="component" value="Chromosome"/>
</dbReference>
<dbReference type="GO" id="GO:0005829">
    <property type="term" value="C:cytosol"/>
    <property type="evidence" value="ECO:0007669"/>
    <property type="project" value="TreeGrafter"/>
</dbReference>
<dbReference type="GO" id="GO:0047952">
    <property type="term" value="F:glycerol-3-phosphate dehydrogenase [NAD(P)+] activity"/>
    <property type="evidence" value="ECO:0007669"/>
    <property type="project" value="UniProtKB-UniRule"/>
</dbReference>
<dbReference type="GO" id="GO:0051287">
    <property type="term" value="F:NAD binding"/>
    <property type="evidence" value="ECO:0007669"/>
    <property type="project" value="InterPro"/>
</dbReference>
<dbReference type="GO" id="GO:0005975">
    <property type="term" value="P:carbohydrate metabolic process"/>
    <property type="evidence" value="ECO:0007669"/>
    <property type="project" value="InterPro"/>
</dbReference>
<dbReference type="GO" id="GO:0046167">
    <property type="term" value="P:glycerol-3-phosphate biosynthetic process"/>
    <property type="evidence" value="ECO:0007669"/>
    <property type="project" value="UniProtKB-UniRule"/>
</dbReference>
<dbReference type="GO" id="GO:0046168">
    <property type="term" value="P:glycerol-3-phosphate catabolic process"/>
    <property type="evidence" value="ECO:0007669"/>
    <property type="project" value="InterPro"/>
</dbReference>
<dbReference type="GO" id="GO:0006650">
    <property type="term" value="P:glycerophospholipid metabolic process"/>
    <property type="evidence" value="ECO:0007669"/>
    <property type="project" value="UniProtKB-UniRule"/>
</dbReference>
<dbReference type="GO" id="GO:0008654">
    <property type="term" value="P:phospholipid biosynthetic process"/>
    <property type="evidence" value="ECO:0007669"/>
    <property type="project" value="UniProtKB-KW"/>
</dbReference>
<dbReference type="Gene3D" id="1.10.1040.10">
    <property type="entry name" value="N-(1-d-carboxylethyl)-l-norvaline Dehydrogenase, domain 2"/>
    <property type="match status" value="1"/>
</dbReference>
<dbReference type="Gene3D" id="3.40.50.720">
    <property type="entry name" value="NAD(P)-binding Rossmann-like Domain"/>
    <property type="match status" value="1"/>
</dbReference>
<dbReference type="HAMAP" id="MF_00394">
    <property type="entry name" value="NAD_Glyc3P_dehydrog"/>
    <property type="match status" value="1"/>
</dbReference>
<dbReference type="InterPro" id="IPR008927">
    <property type="entry name" value="6-PGluconate_DH-like_C_sf"/>
</dbReference>
<dbReference type="InterPro" id="IPR013328">
    <property type="entry name" value="6PGD_dom2"/>
</dbReference>
<dbReference type="InterPro" id="IPR006168">
    <property type="entry name" value="G3P_DH_NAD-dep"/>
</dbReference>
<dbReference type="InterPro" id="IPR006109">
    <property type="entry name" value="G3P_DH_NAD-dep_C"/>
</dbReference>
<dbReference type="InterPro" id="IPR011128">
    <property type="entry name" value="G3P_DH_NAD-dep_N"/>
</dbReference>
<dbReference type="InterPro" id="IPR036291">
    <property type="entry name" value="NAD(P)-bd_dom_sf"/>
</dbReference>
<dbReference type="NCBIfam" id="NF000940">
    <property type="entry name" value="PRK00094.1-2"/>
    <property type="match status" value="1"/>
</dbReference>
<dbReference type="NCBIfam" id="NF000942">
    <property type="entry name" value="PRK00094.1-4"/>
    <property type="match status" value="1"/>
</dbReference>
<dbReference type="PANTHER" id="PTHR11728">
    <property type="entry name" value="GLYCEROL-3-PHOSPHATE DEHYDROGENASE"/>
    <property type="match status" value="1"/>
</dbReference>
<dbReference type="PANTHER" id="PTHR11728:SF1">
    <property type="entry name" value="GLYCEROL-3-PHOSPHATE DEHYDROGENASE [NAD(+)] 2, CHLOROPLASTIC"/>
    <property type="match status" value="1"/>
</dbReference>
<dbReference type="Pfam" id="PF07479">
    <property type="entry name" value="NAD_Gly3P_dh_C"/>
    <property type="match status" value="1"/>
</dbReference>
<dbReference type="Pfam" id="PF01210">
    <property type="entry name" value="NAD_Gly3P_dh_N"/>
    <property type="match status" value="1"/>
</dbReference>
<dbReference type="PIRSF" id="PIRSF000114">
    <property type="entry name" value="Glycerol-3-P_dh"/>
    <property type="match status" value="1"/>
</dbReference>
<dbReference type="PRINTS" id="PR00077">
    <property type="entry name" value="GPDHDRGNASE"/>
</dbReference>
<dbReference type="SUPFAM" id="SSF48179">
    <property type="entry name" value="6-phosphogluconate dehydrogenase C-terminal domain-like"/>
    <property type="match status" value="1"/>
</dbReference>
<dbReference type="SUPFAM" id="SSF51735">
    <property type="entry name" value="NAD(P)-binding Rossmann-fold domains"/>
    <property type="match status" value="1"/>
</dbReference>
<dbReference type="PROSITE" id="PS00957">
    <property type="entry name" value="NAD_G3PDH"/>
    <property type="match status" value="1"/>
</dbReference>
<sequence>MQLSGYPMRQASCDMKEGGLRNKVAVIGSGSWGTAIANLLCKAGNETILWGRDENVIDEINNARVNSKYLPGVELFLRATCDLDYAVADASHVYIALPSFALSKVLPKLSLDKFSIVISLIKCLEPDTGRRMSEVISEALDLGHNRLAVISGPNLALEVANDEPSVSVVASANIATANIVAGTLKCPGFYCIPSSDIKGVEICAASKNLVALISGIARGMDLGDNTRAALITLGFRELLRLVLENGGTEETVFGVAGLGDVVATCNSHLSRNNKAGVLLAKGAPLDEVKQTAEGVVAISGVLALAERSGVYMPIAQALSQVISGKRTAHSLLDICFSLA</sequence>
<evidence type="ECO:0000255" key="1">
    <source>
        <dbReference type="HAMAP-Rule" id="MF_00394"/>
    </source>
</evidence>
<feature type="chain" id="PRO_0000138053" description="Glycerol-3-phosphate dehydrogenase [NAD(P)+]">
    <location>
        <begin position="1"/>
        <end position="339"/>
    </location>
</feature>
<feature type="active site" description="Proton acceptor" evidence="1">
    <location>
        <position position="207"/>
    </location>
</feature>
<feature type="binding site" evidence="1">
    <location>
        <position position="31"/>
    </location>
    <ligand>
        <name>NADPH</name>
        <dbReference type="ChEBI" id="CHEBI:57783"/>
    </ligand>
</feature>
<feature type="binding site" evidence="1">
    <location>
        <position position="32"/>
    </location>
    <ligand>
        <name>NADPH</name>
        <dbReference type="ChEBI" id="CHEBI:57783"/>
    </ligand>
</feature>
<feature type="binding site" evidence="1">
    <location>
        <position position="52"/>
    </location>
    <ligand>
        <name>NADPH</name>
        <dbReference type="ChEBI" id="CHEBI:57783"/>
    </ligand>
</feature>
<feature type="binding site" evidence="1">
    <location>
        <position position="122"/>
    </location>
    <ligand>
        <name>NADPH</name>
        <dbReference type="ChEBI" id="CHEBI:57783"/>
    </ligand>
</feature>
<feature type="binding site" evidence="1">
    <location>
        <position position="122"/>
    </location>
    <ligand>
        <name>sn-glycerol 3-phosphate</name>
        <dbReference type="ChEBI" id="CHEBI:57597"/>
    </ligand>
</feature>
<feature type="binding site" evidence="1">
    <location>
        <position position="152"/>
    </location>
    <ligand>
        <name>sn-glycerol 3-phosphate</name>
        <dbReference type="ChEBI" id="CHEBI:57597"/>
    </ligand>
</feature>
<feature type="binding site" evidence="1">
    <location>
        <position position="156"/>
    </location>
    <ligand>
        <name>NADPH</name>
        <dbReference type="ChEBI" id="CHEBI:57783"/>
    </ligand>
</feature>
<feature type="binding site" evidence="1">
    <location>
        <position position="207"/>
    </location>
    <ligand>
        <name>sn-glycerol 3-phosphate</name>
        <dbReference type="ChEBI" id="CHEBI:57597"/>
    </ligand>
</feature>
<feature type="binding site" evidence="1">
    <location>
        <position position="260"/>
    </location>
    <ligand>
        <name>sn-glycerol 3-phosphate</name>
        <dbReference type="ChEBI" id="CHEBI:57597"/>
    </ligand>
</feature>
<feature type="binding site" evidence="1">
    <location>
        <position position="270"/>
    </location>
    <ligand>
        <name>sn-glycerol 3-phosphate</name>
        <dbReference type="ChEBI" id="CHEBI:57597"/>
    </ligand>
</feature>
<feature type="binding site" evidence="1">
    <location>
        <position position="271"/>
    </location>
    <ligand>
        <name>NADPH</name>
        <dbReference type="ChEBI" id="CHEBI:57783"/>
    </ligand>
</feature>
<feature type="binding site" evidence="1">
    <location>
        <position position="271"/>
    </location>
    <ligand>
        <name>sn-glycerol 3-phosphate</name>
        <dbReference type="ChEBI" id="CHEBI:57597"/>
    </ligand>
</feature>
<feature type="binding site" evidence="1">
    <location>
        <position position="272"/>
    </location>
    <ligand>
        <name>sn-glycerol 3-phosphate</name>
        <dbReference type="ChEBI" id="CHEBI:57597"/>
    </ligand>
</feature>
<feature type="binding site" evidence="1">
    <location>
        <position position="293"/>
    </location>
    <ligand>
        <name>NADPH</name>
        <dbReference type="ChEBI" id="CHEBI:57783"/>
    </ligand>
</feature>
<accession>Q83G27</accession>
<name>GPDA_TROWT</name>
<keyword id="KW-0963">Cytoplasm</keyword>
<keyword id="KW-0444">Lipid biosynthesis</keyword>
<keyword id="KW-0443">Lipid metabolism</keyword>
<keyword id="KW-0520">NAD</keyword>
<keyword id="KW-0521">NADP</keyword>
<keyword id="KW-0547">Nucleotide-binding</keyword>
<keyword id="KW-0560">Oxidoreductase</keyword>
<keyword id="KW-0594">Phospholipid biosynthesis</keyword>
<keyword id="KW-1208">Phospholipid metabolism</keyword>
<keyword id="KW-1185">Reference proteome</keyword>
<organism>
    <name type="scientific">Tropheryma whipplei (strain Twist)</name>
    <name type="common">Whipple's bacillus</name>
    <dbReference type="NCBI Taxonomy" id="203267"/>
    <lineage>
        <taxon>Bacteria</taxon>
        <taxon>Bacillati</taxon>
        <taxon>Actinomycetota</taxon>
        <taxon>Actinomycetes</taxon>
        <taxon>Micrococcales</taxon>
        <taxon>Tropherymataceae</taxon>
        <taxon>Tropheryma</taxon>
    </lineage>
</organism>
<reference key="1">
    <citation type="journal article" date="2003" name="Genome Res.">
        <title>Tropheryma whipplei twist: a human pathogenic Actinobacteria with a reduced genome.</title>
        <authorList>
            <person name="Raoult D."/>
            <person name="Ogata H."/>
            <person name="Audic S."/>
            <person name="Robert C."/>
            <person name="Suhre K."/>
            <person name="Drancourt M."/>
            <person name="Claverie J.-M."/>
        </authorList>
    </citation>
    <scope>NUCLEOTIDE SEQUENCE [LARGE SCALE GENOMIC DNA]</scope>
    <source>
        <strain>Twist</strain>
    </source>
</reference>
<comment type="function">
    <text evidence="1">Catalyzes the reduction of the glycolytic intermediate dihydroxyacetone phosphate (DHAP) to sn-glycerol 3-phosphate (G3P), the key precursor for phospholipid synthesis.</text>
</comment>
<comment type="catalytic activity">
    <reaction evidence="1">
        <text>sn-glycerol 3-phosphate + NAD(+) = dihydroxyacetone phosphate + NADH + H(+)</text>
        <dbReference type="Rhea" id="RHEA:11092"/>
        <dbReference type="ChEBI" id="CHEBI:15378"/>
        <dbReference type="ChEBI" id="CHEBI:57540"/>
        <dbReference type="ChEBI" id="CHEBI:57597"/>
        <dbReference type="ChEBI" id="CHEBI:57642"/>
        <dbReference type="ChEBI" id="CHEBI:57945"/>
        <dbReference type="EC" id="1.1.1.94"/>
    </reaction>
    <physiologicalReaction direction="right-to-left" evidence="1">
        <dbReference type="Rhea" id="RHEA:11094"/>
    </physiologicalReaction>
</comment>
<comment type="catalytic activity">
    <reaction evidence="1">
        <text>sn-glycerol 3-phosphate + NADP(+) = dihydroxyacetone phosphate + NADPH + H(+)</text>
        <dbReference type="Rhea" id="RHEA:11096"/>
        <dbReference type="ChEBI" id="CHEBI:15378"/>
        <dbReference type="ChEBI" id="CHEBI:57597"/>
        <dbReference type="ChEBI" id="CHEBI:57642"/>
        <dbReference type="ChEBI" id="CHEBI:57783"/>
        <dbReference type="ChEBI" id="CHEBI:58349"/>
        <dbReference type="EC" id="1.1.1.94"/>
    </reaction>
    <physiologicalReaction direction="right-to-left" evidence="1">
        <dbReference type="Rhea" id="RHEA:11098"/>
    </physiologicalReaction>
</comment>
<comment type="pathway">
    <text evidence="1">Membrane lipid metabolism; glycerophospholipid metabolism.</text>
</comment>
<comment type="subcellular location">
    <subcellularLocation>
        <location evidence="1">Cytoplasm</location>
    </subcellularLocation>
</comment>
<comment type="similarity">
    <text evidence="1">Belongs to the NAD-dependent glycerol-3-phosphate dehydrogenase family.</text>
</comment>
<protein>
    <recommendedName>
        <fullName evidence="1">Glycerol-3-phosphate dehydrogenase [NAD(P)+]</fullName>
        <ecNumber evidence="1">1.1.1.94</ecNumber>
    </recommendedName>
    <alternativeName>
        <fullName evidence="1">NAD(P)(+)-dependent glycerol-3-phosphate dehydrogenase</fullName>
    </alternativeName>
    <alternativeName>
        <fullName evidence="1">NAD(P)H-dependent dihydroxyacetone-phosphate reductase</fullName>
    </alternativeName>
</protein>